<sequence>MKLGARIFKTGIAITLALYLASWIGLPAPIFAGIAAIFAIQPSIYRSFLIIIDQVQANIIGAVIATVFGLIFGPSPIMIGLTAVIVITIMLKLKIEHTISIALVTVIAILESAGDDFLMFALIRTSTVILGVLSSFIVNLVFLPPKYETKLIHNTVENTEEIMKWIRLSMRQSTEHSILKEDIEKLKEKMIKLDQTYLLYKEERSYFKKTTYVKSRKLVLFRQAIITANRALDTLKKLHRLENEIYHMPEEFQETLTEELDYLLYWHERILMRFVGKIKPHDDAVEEGIRYKQLLTKSFLKNQQNTDEELIDYNMLNIMASAVEYREQLEHLETLITSFQTYHPKDCEIETEE</sequence>
<evidence type="ECO:0000255" key="1"/>
<evidence type="ECO:0000305" key="2"/>
<reference key="1">
    <citation type="journal article" date="1997" name="Microbiology">
        <title>The Bacillus subtilis 168 chromosome from sspE to katA.</title>
        <authorList>
            <person name="Cummings N.J."/>
            <person name="Connerton I.F."/>
        </authorList>
    </citation>
    <scope>NUCLEOTIDE SEQUENCE [GENOMIC DNA]</scope>
    <source>
        <strain>168</strain>
    </source>
</reference>
<reference key="2">
    <citation type="journal article" date="1997" name="Nature">
        <title>The complete genome sequence of the Gram-positive bacterium Bacillus subtilis.</title>
        <authorList>
            <person name="Kunst F."/>
            <person name="Ogasawara N."/>
            <person name="Moszer I."/>
            <person name="Albertini A.M."/>
            <person name="Alloni G."/>
            <person name="Azevedo V."/>
            <person name="Bertero M.G."/>
            <person name="Bessieres P."/>
            <person name="Bolotin A."/>
            <person name="Borchert S."/>
            <person name="Borriss R."/>
            <person name="Boursier L."/>
            <person name="Brans A."/>
            <person name="Braun M."/>
            <person name="Brignell S.C."/>
            <person name="Bron S."/>
            <person name="Brouillet S."/>
            <person name="Bruschi C.V."/>
            <person name="Caldwell B."/>
            <person name="Capuano V."/>
            <person name="Carter N.M."/>
            <person name="Choi S.-K."/>
            <person name="Codani J.-J."/>
            <person name="Connerton I.F."/>
            <person name="Cummings N.J."/>
            <person name="Daniel R.A."/>
            <person name="Denizot F."/>
            <person name="Devine K.M."/>
            <person name="Duesterhoeft A."/>
            <person name="Ehrlich S.D."/>
            <person name="Emmerson P.T."/>
            <person name="Entian K.-D."/>
            <person name="Errington J."/>
            <person name="Fabret C."/>
            <person name="Ferrari E."/>
            <person name="Foulger D."/>
            <person name="Fritz C."/>
            <person name="Fujita M."/>
            <person name="Fujita Y."/>
            <person name="Fuma S."/>
            <person name="Galizzi A."/>
            <person name="Galleron N."/>
            <person name="Ghim S.-Y."/>
            <person name="Glaser P."/>
            <person name="Goffeau A."/>
            <person name="Golightly E.J."/>
            <person name="Grandi G."/>
            <person name="Guiseppi G."/>
            <person name="Guy B.J."/>
            <person name="Haga K."/>
            <person name="Haiech J."/>
            <person name="Harwood C.R."/>
            <person name="Henaut A."/>
            <person name="Hilbert H."/>
            <person name="Holsappel S."/>
            <person name="Hosono S."/>
            <person name="Hullo M.-F."/>
            <person name="Itaya M."/>
            <person name="Jones L.-M."/>
            <person name="Joris B."/>
            <person name="Karamata D."/>
            <person name="Kasahara Y."/>
            <person name="Klaerr-Blanchard M."/>
            <person name="Klein C."/>
            <person name="Kobayashi Y."/>
            <person name="Koetter P."/>
            <person name="Koningstein G."/>
            <person name="Krogh S."/>
            <person name="Kumano M."/>
            <person name="Kurita K."/>
            <person name="Lapidus A."/>
            <person name="Lardinois S."/>
            <person name="Lauber J."/>
            <person name="Lazarevic V."/>
            <person name="Lee S.-M."/>
            <person name="Levine A."/>
            <person name="Liu H."/>
            <person name="Masuda S."/>
            <person name="Mauel C."/>
            <person name="Medigue C."/>
            <person name="Medina N."/>
            <person name="Mellado R.P."/>
            <person name="Mizuno M."/>
            <person name="Moestl D."/>
            <person name="Nakai S."/>
            <person name="Noback M."/>
            <person name="Noone D."/>
            <person name="O'Reilly M."/>
            <person name="Ogawa K."/>
            <person name="Ogiwara A."/>
            <person name="Oudega B."/>
            <person name="Park S.-H."/>
            <person name="Parro V."/>
            <person name="Pohl T.M."/>
            <person name="Portetelle D."/>
            <person name="Porwollik S."/>
            <person name="Prescott A.M."/>
            <person name="Presecan E."/>
            <person name="Pujic P."/>
            <person name="Purnelle B."/>
            <person name="Rapoport G."/>
            <person name="Rey M."/>
            <person name="Reynolds S."/>
            <person name="Rieger M."/>
            <person name="Rivolta C."/>
            <person name="Rocha E."/>
            <person name="Roche B."/>
            <person name="Rose M."/>
            <person name="Sadaie Y."/>
            <person name="Sato T."/>
            <person name="Scanlan E."/>
            <person name="Schleich S."/>
            <person name="Schroeter R."/>
            <person name="Scoffone F."/>
            <person name="Sekiguchi J."/>
            <person name="Sekowska A."/>
            <person name="Seror S.J."/>
            <person name="Serror P."/>
            <person name="Shin B.-S."/>
            <person name="Soldo B."/>
            <person name="Sorokin A."/>
            <person name="Tacconi E."/>
            <person name="Takagi T."/>
            <person name="Takahashi H."/>
            <person name="Takemaru K."/>
            <person name="Takeuchi M."/>
            <person name="Tamakoshi A."/>
            <person name="Tanaka T."/>
            <person name="Terpstra P."/>
            <person name="Tognoni A."/>
            <person name="Tosato V."/>
            <person name="Uchiyama S."/>
            <person name="Vandenbol M."/>
            <person name="Vannier F."/>
            <person name="Vassarotti A."/>
            <person name="Viari A."/>
            <person name="Wambutt R."/>
            <person name="Wedler E."/>
            <person name="Wedler H."/>
            <person name="Weitzenegger T."/>
            <person name="Winters P."/>
            <person name="Wipat A."/>
            <person name="Yamamoto H."/>
            <person name="Yamane K."/>
            <person name="Yasumoto K."/>
            <person name="Yata K."/>
            <person name="Yoshida K."/>
            <person name="Yoshikawa H.-F."/>
            <person name="Zumstein E."/>
            <person name="Yoshikawa H."/>
            <person name="Danchin A."/>
        </authorList>
    </citation>
    <scope>NUCLEOTIDE SEQUENCE [LARGE SCALE GENOMIC DNA]</scope>
    <source>
        <strain>168</strain>
    </source>
</reference>
<accession>P71083</accession>
<accession>Q796Y9</accession>
<comment type="subcellular location">
    <subcellularLocation>
        <location evidence="2">Cell membrane</location>
        <topology evidence="2">Multi-pass membrane protein</topology>
    </subcellularLocation>
</comment>
<comment type="similarity">
    <text evidence="2">Belongs to the UPF0421 family.</text>
</comment>
<organism>
    <name type="scientific">Bacillus subtilis (strain 168)</name>
    <dbReference type="NCBI Taxonomy" id="224308"/>
    <lineage>
        <taxon>Bacteria</taxon>
        <taxon>Bacillati</taxon>
        <taxon>Bacillota</taxon>
        <taxon>Bacilli</taxon>
        <taxon>Bacillales</taxon>
        <taxon>Bacillaceae</taxon>
        <taxon>Bacillus</taxon>
    </lineage>
</organism>
<feature type="chain" id="PRO_0000360162" description="UPF0421 protein YgaE">
    <location>
        <begin position="1"/>
        <end position="353"/>
    </location>
</feature>
<feature type="transmembrane region" description="Helical" evidence="1">
    <location>
        <begin position="20"/>
        <end position="40"/>
    </location>
</feature>
<feature type="transmembrane region" description="Helical" evidence="1">
    <location>
        <begin position="67"/>
        <end position="87"/>
    </location>
</feature>
<feature type="transmembrane region" description="Helical" evidence="1">
    <location>
        <begin position="103"/>
        <end position="123"/>
    </location>
</feature>
<feature type="transmembrane region" description="Helical" evidence="1">
    <location>
        <begin position="125"/>
        <end position="145"/>
    </location>
</feature>
<dbReference type="EMBL" id="Z82044">
    <property type="protein sequence ID" value="CAB04798.1"/>
    <property type="molecule type" value="Genomic_DNA"/>
</dbReference>
<dbReference type="EMBL" id="AL009126">
    <property type="protein sequence ID" value="CAB12698.1"/>
    <property type="molecule type" value="Genomic_DNA"/>
</dbReference>
<dbReference type="PIR" id="H69815">
    <property type="entry name" value="H69815"/>
</dbReference>
<dbReference type="RefSeq" id="NP_388750.1">
    <property type="nucleotide sequence ID" value="NC_000964.3"/>
</dbReference>
<dbReference type="RefSeq" id="WP_003233537.1">
    <property type="nucleotide sequence ID" value="NZ_OZ025638.1"/>
</dbReference>
<dbReference type="SMR" id="P71083"/>
<dbReference type="FunCoup" id="P71083">
    <property type="interactions" value="58"/>
</dbReference>
<dbReference type="STRING" id="224308.BSU08700"/>
<dbReference type="TCDB" id="2.A.85.4.2">
    <property type="family name" value="the aromatic acid exporter (arae) family"/>
</dbReference>
<dbReference type="PaxDb" id="224308-BSU08700"/>
<dbReference type="EnsemblBacteria" id="CAB12698">
    <property type="protein sequence ID" value="CAB12698"/>
    <property type="gene ID" value="BSU_08700"/>
</dbReference>
<dbReference type="GeneID" id="939721"/>
<dbReference type="KEGG" id="bsu:BSU08700"/>
<dbReference type="PATRIC" id="fig|224308.179.peg.938"/>
<dbReference type="eggNOG" id="COG4129">
    <property type="taxonomic scope" value="Bacteria"/>
</dbReference>
<dbReference type="InParanoid" id="P71083"/>
<dbReference type="OrthoDB" id="1653617at2"/>
<dbReference type="PhylomeDB" id="P71083"/>
<dbReference type="BioCyc" id="BSUB:BSU08700-MONOMER"/>
<dbReference type="Proteomes" id="UP000001570">
    <property type="component" value="Chromosome"/>
</dbReference>
<dbReference type="GO" id="GO:0005886">
    <property type="term" value="C:plasma membrane"/>
    <property type="evidence" value="ECO:0000318"/>
    <property type="project" value="GO_Central"/>
</dbReference>
<dbReference type="InterPro" id="IPR010343">
    <property type="entry name" value="ArAE_1"/>
</dbReference>
<dbReference type="PANTHER" id="PTHR30509">
    <property type="entry name" value="P-HYDROXYBENZOIC ACID EFFLUX PUMP SUBUNIT-RELATED"/>
    <property type="match status" value="1"/>
</dbReference>
<dbReference type="PANTHER" id="PTHR30509:SF27">
    <property type="entry name" value="UPF0421 PROTEIN YGAE"/>
    <property type="match status" value="1"/>
</dbReference>
<dbReference type="Pfam" id="PF06081">
    <property type="entry name" value="ArAE_1"/>
    <property type="match status" value="1"/>
</dbReference>
<keyword id="KW-1003">Cell membrane</keyword>
<keyword id="KW-0472">Membrane</keyword>
<keyword id="KW-1185">Reference proteome</keyword>
<keyword id="KW-0812">Transmembrane</keyword>
<keyword id="KW-1133">Transmembrane helix</keyword>
<proteinExistence type="inferred from homology"/>
<name>YGAE_BACSU</name>
<gene>
    <name type="primary">ygaE</name>
    <name type="ordered locus">BSU08700</name>
</gene>
<protein>
    <recommendedName>
        <fullName>UPF0421 protein YgaE</fullName>
    </recommendedName>
</protein>